<proteinExistence type="inferred from homology"/>
<feature type="chain" id="PRO_0000190578" description="4-hydroxy-3-methylbut-2-en-1-yl diphosphate synthase (flavodoxin)">
    <location>
        <begin position="1"/>
        <end position="405"/>
    </location>
</feature>
<feature type="binding site" evidence="1">
    <location>
        <position position="297"/>
    </location>
    <ligand>
        <name>[4Fe-4S] cluster</name>
        <dbReference type="ChEBI" id="CHEBI:49883"/>
    </ligand>
</feature>
<feature type="binding site" evidence="1">
    <location>
        <position position="300"/>
    </location>
    <ligand>
        <name>[4Fe-4S] cluster</name>
        <dbReference type="ChEBI" id="CHEBI:49883"/>
    </ligand>
</feature>
<feature type="binding site" evidence="1">
    <location>
        <position position="343"/>
    </location>
    <ligand>
        <name>[4Fe-4S] cluster</name>
        <dbReference type="ChEBI" id="CHEBI:49883"/>
    </ligand>
</feature>
<feature type="binding site" evidence="1">
    <location>
        <position position="350"/>
    </location>
    <ligand>
        <name>[4Fe-4S] cluster</name>
        <dbReference type="ChEBI" id="CHEBI:49883"/>
    </ligand>
</feature>
<accession>Q5NH64</accession>
<evidence type="ECO:0000255" key="1">
    <source>
        <dbReference type="HAMAP-Rule" id="MF_00159"/>
    </source>
</evidence>
<dbReference type="EC" id="1.17.7.3" evidence="1"/>
<dbReference type="EMBL" id="AJ749949">
    <property type="protein sequence ID" value="CAG45240.1"/>
    <property type="molecule type" value="Genomic_DNA"/>
</dbReference>
<dbReference type="RefSeq" id="YP_169628.1">
    <property type="nucleotide sequence ID" value="NC_006570.2"/>
</dbReference>
<dbReference type="SMR" id="Q5NH64"/>
<dbReference type="STRING" id="177416.FTT_0607"/>
<dbReference type="DNASU" id="3190876"/>
<dbReference type="EnsemblBacteria" id="CAG45240">
    <property type="protein sequence ID" value="CAG45240"/>
    <property type="gene ID" value="FTT_0607"/>
</dbReference>
<dbReference type="KEGG" id="ftu:FTT_0607"/>
<dbReference type="eggNOG" id="COG0821">
    <property type="taxonomic scope" value="Bacteria"/>
</dbReference>
<dbReference type="OrthoDB" id="9803214at2"/>
<dbReference type="UniPathway" id="UPA00056">
    <property type="reaction ID" value="UER00096"/>
</dbReference>
<dbReference type="Proteomes" id="UP000001174">
    <property type="component" value="Chromosome"/>
</dbReference>
<dbReference type="GO" id="GO:0051539">
    <property type="term" value="F:4 iron, 4 sulfur cluster binding"/>
    <property type="evidence" value="ECO:0007669"/>
    <property type="project" value="UniProtKB-UniRule"/>
</dbReference>
<dbReference type="GO" id="GO:0046429">
    <property type="term" value="F:4-hydroxy-3-methylbut-2-en-1-yl diphosphate synthase activity (ferredoxin)"/>
    <property type="evidence" value="ECO:0007669"/>
    <property type="project" value="UniProtKB-UniRule"/>
</dbReference>
<dbReference type="GO" id="GO:0141197">
    <property type="term" value="F:4-hydroxy-3-methylbut-2-enyl-diphosphate synthase activity (flavodoxin)"/>
    <property type="evidence" value="ECO:0007669"/>
    <property type="project" value="UniProtKB-EC"/>
</dbReference>
<dbReference type="GO" id="GO:0005506">
    <property type="term" value="F:iron ion binding"/>
    <property type="evidence" value="ECO:0007669"/>
    <property type="project" value="InterPro"/>
</dbReference>
<dbReference type="GO" id="GO:0019288">
    <property type="term" value="P:isopentenyl diphosphate biosynthetic process, methylerythritol 4-phosphate pathway"/>
    <property type="evidence" value="ECO:0007669"/>
    <property type="project" value="UniProtKB-UniRule"/>
</dbReference>
<dbReference type="GO" id="GO:0016114">
    <property type="term" value="P:terpenoid biosynthetic process"/>
    <property type="evidence" value="ECO:0007669"/>
    <property type="project" value="InterPro"/>
</dbReference>
<dbReference type="FunFam" id="3.20.20.20:FF:000001">
    <property type="entry name" value="4-hydroxy-3-methylbut-2-en-1-yl diphosphate synthase (flavodoxin)"/>
    <property type="match status" value="1"/>
</dbReference>
<dbReference type="FunFam" id="3.30.413.10:FF:000012">
    <property type="entry name" value="4-hydroxy-3-methylbut-2-en-1-yl diphosphate synthase (flavodoxin)"/>
    <property type="match status" value="1"/>
</dbReference>
<dbReference type="Gene3D" id="3.20.20.20">
    <property type="entry name" value="Dihydropteroate synthase-like"/>
    <property type="match status" value="1"/>
</dbReference>
<dbReference type="Gene3D" id="3.30.413.10">
    <property type="entry name" value="Sulfite Reductase Hemoprotein, domain 1"/>
    <property type="match status" value="1"/>
</dbReference>
<dbReference type="HAMAP" id="MF_00159">
    <property type="entry name" value="IspG"/>
    <property type="match status" value="1"/>
</dbReference>
<dbReference type="InterPro" id="IPR011005">
    <property type="entry name" value="Dihydropteroate_synth-like_sf"/>
</dbReference>
<dbReference type="InterPro" id="IPR016425">
    <property type="entry name" value="IspG_bac"/>
</dbReference>
<dbReference type="InterPro" id="IPR004588">
    <property type="entry name" value="IspG_bac-typ"/>
</dbReference>
<dbReference type="InterPro" id="IPR045854">
    <property type="entry name" value="NO2/SO3_Rdtase_4Fe4S_sf"/>
</dbReference>
<dbReference type="NCBIfam" id="TIGR00612">
    <property type="entry name" value="ispG_gcpE"/>
    <property type="match status" value="1"/>
</dbReference>
<dbReference type="NCBIfam" id="NF001540">
    <property type="entry name" value="PRK00366.1"/>
    <property type="match status" value="1"/>
</dbReference>
<dbReference type="PANTHER" id="PTHR30454">
    <property type="entry name" value="4-HYDROXY-3-METHYLBUT-2-EN-1-YL DIPHOSPHATE SYNTHASE"/>
    <property type="match status" value="1"/>
</dbReference>
<dbReference type="PANTHER" id="PTHR30454:SF0">
    <property type="entry name" value="4-HYDROXY-3-METHYLBUT-2-EN-1-YL DIPHOSPHATE SYNTHASE (FERREDOXIN), CHLOROPLASTIC"/>
    <property type="match status" value="1"/>
</dbReference>
<dbReference type="Pfam" id="PF04551">
    <property type="entry name" value="GcpE"/>
    <property type="match status" value="1"/>
</dbReference>
<dbReference type="PIRSF" id="PIRSF004640">
    <property type="entry name" value="IspG"/>
    <property type="match status" value="1"/>
</dbReference>
<dbReference type="SUPFAM" id="SSF51717">
    <property type="entry name" value="Dihydropteroate synthetase-like"/>
    <property type="match status" value="1"/>
</dbReference>
<dbReference type="SUPFAM" id="SSF56014">
    <property type="entry name" value="Nitrite and sulphite reductase 4Fe-4S domain-like"/>
    <property type="match status" value="1"/>
</dbReference>
<name>ISPG_FRATT</name>
<sequence>MGSYMNKTSVVKVGNVLIGGDNPVVVQSMTDTYTADVEKTVKQILALHKAGSEIVRITVNDESAAAAVPEIVKELAKHDCHVPLVGDFHYNGHTLLSKYPECAKALAKYRINPGNVGFGKKKDTQFAEIIKIAIANDKPVRIGVNWGSLDQALLARLIDENNAQENPLSLQQIMHKALITSALESAKYAEELGLAKDKIIISCKVSEVQDLIAVYQKLAKECGYALHLGLTEAGMGTKGIVASAVSLGILLQQGIGNTIRVSLTPAPNAPRTEEVRVCREILQNLGMRTFTPSVTSCPGCGRTTSSFFRELTSKVKDHLDEKMHTWKEQYHGVEAMKVAVMGCVVNGPGESKNADIGISLPGSGESPVAPVFIDGKKAHTLRGDNISEEFIEIVENYVKNRYGKK</sequence>
<protein>
    <recommendedName>
        <fullName evidence="1">4-hydroxy-3-methylbut-2-en-1-yl diphosphate synthase (flavodoxin)</fullName>
        <ecNumber evidence="1">1.17.7.3</ecNumber>
    </recommendedName>
    <alternativeName>
        <fullName evidence="1">1-hydroxy-2-methyl-2-(E)-butenyl 4-diphosphate synthase</fullName>
    </alternativeName>
</protein>
<reference key="1">
    <citation type="journal article" date="2005" name="Nat. Genet.">
        <title>The complete genome sequence of Francisella tularensis, the causative agent of tularemia.</title>
        <authorList>
            <person name="Larsson P."/>
            <person name="Oyston P.C.F."/>
            <person name="Chain P."/>
            <person name="Chu M.C."/>
            <person name="Duffield M."/>
            <person name="Fuxelius H.-H."/>
            <person name="Garcia E."/>
            <person name="Haelltorp G."/>
            <person name="Johansson D."/>
            <person name="Isherwood K.E."/>
            <person name="Karp P.D."/>
            <person name="Larsson E."/>
            <person name="Liu Y."/>
            <person name="Michell S."/>
            <person name="Prior J."/>
            <person name="Prior R."/>
            <person name="Malfatti S."/>
            <person name="Sjoestedt A."/>
            <person name="Svensson K."/>
            <person name="Thompson N."/>
            <person name="Vergez L."/>
            <person name="Wagg J.K."/>
            <person name="Wren B.W."/>
            <person name="Lindler L.E."/>
            <person name="Andersson S.G.E."/>
            <person name="Forsman M."/>
            <person name="Titball R.W."/>
        </authorList>
    </citation>
    <scope>NUCLEOTIDE SEQUENCE [LARGE SCALE GENOMIC DNA]</scope>
    <source>
        <strain>SCHU S4 / Schu 4</strain>
    </source>
</reference>
<comment type="function">
    <text evidence="1">Converts 2C-methyl-D-erythritol 2,4-cyclodiphosphate (ME-2,4cPP) into 1-hydroxy-2-methyl-2-(E)-butenyl 4-diphosphate.</text>
</comment>
<comment type="catalytic activity">
    <reaction evidence="1">
        <text>(2E)-4-hydroxy-3-methylbut-2-enyl diphosphate + oxidized [flavodoxin] + H2O + 2 H(+) = 2-C-methyl-D-erythritol 2,4-cyclic diphosphate + reduced [flavodoxin]</text>
        <dbReference type="Rhea" id="RHEA:43604"/>
        <dbReference type="Rhea" id="RHEA-COMP:10622"/>
        <dbReference type="Rhea" id="RHEA-COMP:10623"/>
        <dbReference type="ChEBI" id="CHEBI:15377"/>
        <dbReference type="ChEBI" id="CHEBI:15378"/>
        <dbReference type="ChEBI" id="CHEBI:57618"/>
        <dbReference type="ChEBI" id="CHEBI:58210"/>
        <dbReference type="ChEBI" id="CHEBI:58483"/>
        <dbReference type="ChEBI" id="CHEBI:128753"/>
        <dbReference type="EC" id="1.17.7.3"/>
    </reaction>
</comment>
<comment type="cofactor">
    <cofactor evidence="1">
        <name>[4Fe-4S] cluster</name>
        <dbReference type="ChEBI" id="CHEBI:49883"/>
    </cofactor>
    <text evidence="1">Binds 1 [4Fe-4S] cluster.</text>
</comment>
<comment type="pathway">
    <text evidence="1">Isoprenoid biosynthesis; isopentenyl diphosphate biosynthesis via DXP pathway; isopentenyl diphosphate from 1-deoxy-D-xylulose 5-phosphate: step 5/6.</text>
</comment>
<comment type="similarity">
    <text evidence="1">Belongs to the IspG family.</text>
</comment>
<organism>
    <name type="scientific">Francisella tularensis subsp. tularensis (strain SCHU S4 / Schu 4)</name>
    <dbReference type="NCBI Taxonomy" id="177416"/>
    <lineage>
        <taxon>Bacteria</taxon>
        <taxon>Pseudomonadati</taxon>
        <taxon>Pseudomonadota</taxon>
        <taxon>Gammaproteobacteria</taxon>
        <taxon>Thiotrichales</taxon>
        <taxon>Francisellaceae</taxon>
        <taxon>Francisella</taxon>
    </lineage>
</organism>
<gene>
    <name evidence="1" type="primary">ispG</name>
    <name type="ordered locus">FTT_0607</name>
</gene>
<keyword id="KW-0004">4Fe-4S</keyword>
<keyword id="KW-0408">Iron</keyword>
<keyword id="KW-0411">Iron-sulfur</keyword>
<keyword id="KW-0414">Isoprene biosynthesis</keyword>
<keyword id="KW-0479">Metal-binding</keyword>
<keyword id="KW-0560">Oxidoreductase</keyword>
<keyword id="KW-1185">Reference proteome</keyword>